<evidence type="ECO:0000250" key="1">
    <source>
        <dbReference type="UniProtKB" id="Q9NY33"/>
    </source>
</evidence>
<evidence type="ECO:0000269" key="2">
    <source>
    </source>
</evidence>
<evidence type="ECO:0000305" key="3"/>
<feature type="chain" id="PRO_0000078241" description="Dipeptidyl peptidase 3">
    <location>
        <begin position="1"/>
        <end position="73"/>
    </location>
</feature>
<feature type="non-consecutive residues" evidence="3">
    <location>
        <begin position="7"/>
        <end position="8"/>
    </location>
</feature>
<feature type="non-consecutive residues" evidence="3">
    <location>
        <begin position="14"/>
        <end position="15"/>
    </location>
</feature>
<feature type="non-consecutive residues" evidence="3">
    <location>
        <begin position="26"/>
        <end position="27"/>
    </location>
</feature>
<feature type="non-consecutive residues" evidence="3">
    <location>
        <begin position="39"/>
        <end position="40"/>
    </location>
</feature>
<feature type="non-consecutive residues" evidence="3">
    <location>
        <begin position="44"/>
        <end position="45"/>
    </location>
</feature>
<feature type="non-consecutive residues" evidence="3">
    <location>
        <begin position="61"/>
        <end position="62"/>
    </location>
</feature>
<dbReference type="EC" id="3.4.14.4"/>
<dbReference type="GO" id="GO:0016020">
    <property type="term" value="C:membrane"/>
    <property type="evidence" value="ECO:0007669"/>
    <property type="project" value="UniProtKB-SubCell"/>
</dbReference>
<dbReference type="GO" id="GO:0004177">
    <property type="term" value="F:aminopeptidase activity"/>
    <property type="evidence" value="ECO:0007669"/>
    <property type="project" value="UniProtKB-KW"/>
</dbReference>
<dbReference type="GO" id="GO:0008239">
    <property type="term" value="F:dipeptidyl-peptidase activity"/>
    <property type="evidence" value="ECO:0007669"/>
    <property type="project" value="UniProtKB-EC"/>
</dbReference>
<dbReference type="GO" id="GO:0008237">
    <property type="term" value="F:metallopeptidase activity"/>
    <property type="evidence" value="ECO:0007669"/>
    <property type="project" value="UniProtKB-KW"/>
</dbReference>
<dbReference type="GO" id="GO:0006508">
    <property type="term" value="P:proteolysis"/>
    <property type="evidence" value="ECO:0007669"/>
    <property type="project" value="UniProtKB-KW"/>
</dbReference>
<organism evidence="3">
    <name type="scientific">Blaberus craniifer</name>
    <name type="common">Death's head cockroach</name>
    <dbReference type="NCBI Taxonomy" id="6982"/>
    <lineage>
        <taxon>Eukaryota</taxon>
        <taxon>Metazoa</taxon>
        <taxon>Ecdysozoa</taxon>
        <taxon>Arthropoda</taxon>
        <taxon>Hexapoda</taxon>
        <taxon>Insecta</taxon>
        <taxon>Pterygota</taxon>
        <taxon>Neoptera</taxon>
        <taxon>Polyneoptera</taxon>
        <taxon>Dictyoptera</taxon>
        <taxon>Blattodea</taxon>
        <taxon>Blaberoidea</taxon>
        <taxon>Blaberidae</taxon>
        <taxon>Blaberinae</taxon>
        <taxon>Blaberus</taxon>
    </lineage>
</organism>
<keyword id="KW-0031">Aminopeptidase</keyword>
<keyword id="KW-0903">Direct protein sequencing</keyword>
<keyword id="KW-0378">Hydrolase</keyword>
<keyword id="KW-0472">Membrane</keyword>
<keyword id="KW-0482">Metalloprotease</keyword>
<keyword id="KW-0645">Protease</keyword>
<keyword id="KW-0812">Transmembrane</keyword>
<keyword id="KW-0862">Zinc</keyword>
<accession>P83681</accession>
<name>DPP3_BLACR</name>
<sequence length="73" mass="8129">FANLVEKTTYFSDKGEFEGFVAMVNKNVTLGNVIPASYKLQVYKTYDATHEGLIQSFVENGTEEVPLDGXEXX</sequence>
<comment type="function">
    <text evidence="2">Degrades neuropeptide proctolin (RYLPT) by cleavage between Tyr and Leu residues.</text>
</comment>
<comment type="catalytic activity">
    <reaction evidence="2">
        <text>Release of an N-terminal dipeptide from a peptide comprising four or more residues, with broad specificity. Also acts on dipeptidyl 2-naphthylamides.</text>
        <dbReference type="EC" id="3.4.14.4"/>
    </reaction>
</comment>
<comment type="cofactor">
    <cofactor evidence="1">
        <name>Zn(2+)</name>
        <dbReference type="ChEBI" id="CHEBI:29105"/>
    </cofactor>
    <text evidence="1">Binds 1 zinc ion per subunit.</text>
</comment>
<comment type="biophysicochemical properties">
    <phDependence>
        <text>Optimum pH is 5.1.</text>
    </phDependence>
</comment>
<comment type="subcellular location">
    <subcellularLocation>
        <location evidence="2">Membrane</location>
        <topology evidence="2">Multi-pass membrane protein</topology>
    </subcellularLocation>
</comment>
<comment type="miscellaneous">
    <text>Purified protein is present in 2 isoforms; 76 kDa and 80 kDa.</text>
</comment>
<comment type="similarity">
    <text evidence="3">Belongs to the peptidase M49 family.</text>
</comment>
<comment type="caution">
    <text evidence="3">The order of the last peptide shown is unknown.</text>
</comment>
<proteinExistence type="evidence at protein level"/>
<protein>
    <recommendedName>
        <fullName>Dipeptidyl peptidase 3</fullName>
        <ecNumber>3.4.14.4</ecNumber>
    </recommendedName>
    <alternativeName>
        <fullName>Dipeptidyl aminopeptidase III</fullName>
    </alternativeName>
    <alternativeName>
        <fullName>Dipeptidyl arylamidase III</fullName>
    </alternativeName>
    <alternativeName>
        <fullName>Dipeptidyl peptidase III</fullName>
        <shortName>DPP III</shortName>
    </alternativeName>
    <alternativeName>
        <fullName>Proctolinase</fullName>
    </alternativeName>
</protein>
<reference evidence="3" key="1">
    <citation type="journal article" date="2001" name="Eur. J. Biochem.">
        <title>Purification, partial sequencing and characterization of an insect membrane dipeptidyl aminopeptidase that degrades the insect neuropeptide proctolin.</title>
        <authorList>
            <person name="Mazzocco C."/>
            <person name="Fukasawa K.M."/>
            <person name="Raymond A.-A."/>
            <person name="Puiroux J."/>
        </authorList>
    </citation>
    <scope>PROTEIN SEQUENCE</scope>
    <scope>FUNCTION</scope>
    <scope>ENZYME ACTIVITY</scope>
    <scope>SUBCELLULAR LOCATION</scope>
    <source>
        <tissue evidence="2">Hindgut</tissue>
    </source>
</reference>